<dbReference type="EC" id="5.3.1.26" evidence="1"/>
<dbReference type="EMBL" id="AJ938182">
    <property type="protein sequence ID" value="CAI81764.1"/>
    <property type="molecule type" value="Genomic_DNA"/>
</dbReference>
<dbReference type="RefSeq" id="WP_000684745.1">
    <property type="nucleotide sequence ID" value="NC_007622.1"/>
</dbReference>
<dbReference type="SMR" id="Q2YYJ4"/>
<dbReference type="KEGG" id="sab:SAB2075c"/>
<dbReference type="HOGENOM" id="CLU_091396_2_0_9"/>
<dbReference type="UniPathway" id="UPA00702">
    <property type="reaction ID" value="UER00714"/>
</dbReference>
<dbReference type="GO" id="GO:0050044">
    <property type="term" value="F:galactose-6-phosphate isomerase activity"/>
    <property type="evidence" value="ECO:0007669"/>
    <property type="project" value="UniProtKB-UniRule"/>
</dbReference>
<dbReference type="GO" id="GO:0004751">
    <property type="term" value="F:ribose-5-phosphate isomerase activity"/>
    <property type="evidence" value="ECO:0007669"/>
    <property type="project" value="TreeGrafter"/>
</dbReference>
<dbReference type="GO" id="GO:0019316">
    <property type="term" value="P:D-allose catabolic process"/>
    <property type="evidence" value="ECO:0007669"/>
    <property type="project" value="TreeGrafter"/>
</dbReference>
<dbReference type="GO" id="GO:0019388">
    <property type="term" value="P:galactose catabolic process"/>
    <property type="evidence" value="ECO:0007669"/>
    <property type="project" value="UniProtKB-UniPathway"/>
</dbReference>
<dbReference type="GO" id="GO:0019512">
    <property type="term" value="P:lactose catabolic process via tagatose-6-phosphate"/>
    <property type="evidence" value="ECO:0007669"/>
    <property type="project" value="UniProtKB-UniRule"/>
</dbReference>
<dbReference type="GO" id="GO:0009052">
    <property type="term" value="P:pentose-phosphate shunt, non-oxidative branch"/>
    <property type="evidence" value="ECO:0007669"/>
    <property type="project" value="TreeGrafter"/>
</dbReference>
<dbReference type="Gene3D" id="3.40.1400.10">
    <property type="entry name" value="Sugar-phosphate isomerase, RpiB/LacA/LacB"/>
    <property type="match status" value="1"/>
</dbReference>
<dbReference type="HAMAP" id="MF_01556">
    <property type="entry name" value="LacB"/>
    <property type="match status" value="1"/>
</dbReference>
<dbReference type="InterPro" id="IPR004784">
    <property type="entry name" value="LacB"/>
</dbReference>
<dbReference type="InterPro" id="IPR003500">
    <property type="entry name" value="RpiB_LacA_LacB"/>
</dbReference>
<dbReference type="InterPro" id="IPR036569">
    <property type="entry name" value="RpiB_LacA_LacB_sf"/>
</dbReference>
<dbReference type="NCBIfam" id="TIGR01119">
    <property type="entry name" value="lacB"/>
    <property type="match status" value="1"/>
</dbReference>
<dbReference type="NCBIfam" id="NF004051">
    <property type="entry name" value="PRK05571.1"/>
    <property type="match status" value="1"/>
</dbReference>
<dbReference type="NCBIfam" id="NF006381">
    <property type="entry name" value="PRK08622.1"/>
    <property type="match status" value="1"/>
</dbReference>
<dbReference type="NCBIfam" id="NF009258">
    <property type="entry name" value="PRK12615.1"/>
    <property type="match status" value="1"/>
</dbReference>
<dbReference type="NCBIfam" id="TIGR00689">
    <property type="entry name" value="rpiB_lacA_lacB"/>
    <property type="match status" value="1"/>
</dbReference>
<dbReference type="PANTHER" id="PTHR30345:SF0">
    <property type="entry name" value="DNA DAMAGE-REPAIR_TOLERATION PROTEIN DRT102"/>
    <property type="match status" value="1"/>
</dbReference>
<dbReference type="PANTHER" id="PTHR30345">
    <property type="entry name" value="RIBOSE-5-PHOSPHATE ISOMERASE B"/>
    <property type="match status" value="1"/>
</dbReference>
<dbReference type="Pfam" id="PF02502">
    <property type="entry name" value="LacAB_rpiB"/>
    <property type="match status" value="1"/>
</dbReference>
<dbReference type="PIRSF" id="PIRSF005384">
    <property type="entry name" value="RpiB_LacA_B"/>
    <property type="match status" value="1"/>
</dbReference>
<dbReference type="SUPFAM" id="SSF89623">
    <property type="entry name" value="Ribose/Galactose isomerase RpiB/AlsB"/>
    <property type="match status" value="1"/>
</dbReference>
<feature type="chain" id="PRO_1000068927" description="Galactose-6-phosphate isomerase subunit LacB">
    <location>
        <begin position="1"/>
        <end position="171"/>
    </location>
</feature>
<reference key="1">
    <citation type="journal article" date="2007" name="PLoS ONE">
        <title>Molecular correlates of host specialization in Staphylococcus aureus.</title>
        <authorList>
            <person name="Herron-Olson L."/>
            <person name="Fitzgerald J.R."/>
            <person name="Musser J.M."/>
            <person name="Kapur V."/>
        </authorList>
    </citation>
    <scope>NUCLEOTIDE SEQUENCE [LARGE SCALE GENOMIC DNA]</scope>
    <source>
        <strain>bovine RF122 / ET3-1</strain>
    </source>
</reference>
<organism>
    <name type="scientific">Staphylococcus aureus (strain bovine RF122 / ET3-1)</name>
    <dbReference type="NCBI Taxonomy" id="273036"/>
    <lineage>
        <taxon>Bacteria</taxon>
        <taxon>Bacillati</taxon>
        <taxon>Bacillota</taxon>
        <taxon>Bacilli</taxon>
        <taxon>Bacillales</taxon>
        <taxon>Staphylococcaceae</taxon>
        <taxon>Staphylococcus</taxon>
    </lineage>
</organism>
<protein>
    <recommendedName>
        <fullName evidence="1">Galactose-6-phosphate isomerase subunit LacB</fullName>
        <ecNumber evidence="1">5.3.1.26</ecNumber>
    </recommendedName>
</protein>
<comment type="catalytic activity">
    <reaction evidence="1">
        <text>aldehydo-D-galactose 6-phosphate = keto-D-tagatose 6-phosphate</text>
        <dbReference type="Rhea" id="RHEA:13033"/>
        <dbReference type="ChEBI" id="CHEBI:58255"/>
        <dbReference type="ChEBI" id="CHEBI:134283"/>
        <dbReference type="EC" id="5.3.1.26"/>
    </reaction>
</comment>
<comment type="pathway">
    <text evidence="1">Carbohydrate metabolism; D-galactose 6-phosphate degradation; D-tagatose 6-phosphate from D-galactose 6-phosphate: step 1/1.</text>
</comment>
<comment type="subunit">
    <text evidence="1">Heteromultimeric protein consisting of LacA and LacB.</text>
</comment>
<comment type="similarity">
    <text evidence="1">Belongs to the LacAB/RpiB family.</text>
</comment>
<name>LACB_STAAB</name>
<gene>
    <name evidence="1" type="primary">lacB</name>
    <name type="ordered locus">SAB2075c</name>
</gene>
<evidence type="ECO:0000255" key="1">
    <source>
        <dbReference type="HAMAP-Rule" id="MF_01556"/>
    </source>
</evidence>
<proteinExistence type="inferred from homology"/>
<sequence length="171" mass="19020">MKIALGCDHIVTDTKMRVSEFLKSKGHEVIDVGTYDFTRTHYPIFGKKVGEQVVSGNADLGVCICGTGVGINNAVNKVPGVRSALVRDMTSALYAKEELNANVIGFGGRIIGELLMCDIIDAFINAEYKPTEENKKLIAKIKHLETRNADQADPHFFDEFLEKWDRGEYHD</sequence>
<accession>Q2YYJ4</accession>
<keyword id="KW-0413">Isomerase</keyword>
<keyword id="KW-0423">Lactose metabolism</keyword>